<reference key="1">
    <citation type="journal article" date="1990" name="J. Protein Chem.">
        <title>Primary structure of avian hepatic rhodanese.</title>
        <authorList>
            <person name="Kohanski R.A."/>
            <person name="Heinrikson R.L."/>
        </authorList>
    </citation>
    <scope>PROTEIN SEQUENCE</scope>
    <source>
        <tissue>Liver</tissue>
    </source>
</reference>
<protein>
    <recommendedName>
        <fullName>Thiosulfate sulfurtransferase</fullName>
        <ecNumber>2.8.1.1</ecNumber>
    </recommendedName>
    <alternativeName>
        <fullName>Rhodanese</fullName>
    </alternativeName>
</protein>
<evidence type="ECO:0000250" key="1"/>
<evidence type="ECO:0000255" key="2">
    <source>
        <dbReference type="PROSITE-ProRule" id="PRU00173"/>
    </source>
</evidence>
<feature type="chain" id="PRO_0000139393" description="Thiosulfate sulfurtransferase">
    <location>
        <begin position="1"/>
        <end position="289"/>
    </location>
</feature>
<feature type="domain" description="Rhodanese 1" evidence="2">
    <location>
        <begin position="24"/>
        <end position="142"/>
    </location>
</feature>
<feature type="domain" description="Rhodanese 2" evidence="2">
    <location>
        <begin position="172"/>
        <end position="284"/>
    </location>
</feature>
<feature type="region of interest" description="Hinge">
    <location>
        <begin position="143"/>
        <end position="158"/>
    </location>
</feature>
<feature type="active site" description="Cysteine persulfide intermediate" evidence="2">
    <location>
        <position position="244"/>
    </location>
</feature>
<feature type="binding site" evidence="1">
    <location>
        <position position="186"/>
    </location>
    <ligand>
        <name>substrate</name>
    </ligand>
</feature>
<feature type="binding site" evidence="1">
    <location>
        <position position="246"/>
    </location>
    <ligand>
        <name>substrate</name>
    </ligand>
</feature>
<dbReference type="EC" id="2.8.1.1"/>
<dbReference type="PIR" id="A37209">
    <property type="entry name" value="A37209"/>
</dbReference>
<dbReference type="SMR" id="P25324"/>
<dbReference type="FunCoup" id="P25324">
    <property type="interactions" value="1792"/>
</dbReference>
<dbReference type="STRING" id="9031.ENSGALP00000020374"/>
<dbReference type="PaxDb" id="9031-ENSGALP00000020374"/>
<dbReference type="VEuPathDB" id="HostDB:geneid_418049"/>
<dbReference type="eggNOG" id="KOG1529">
    <property type="taxonomic scope" value="Eukaryota"/>
</dbReference>
<dbReference type="InParanoid" id="P25324"/>
<dbReference type="OrthoDB" id="270167at2759"/>
<dbReference type="PhylomeDB" id="P25324"/>
<dbReference type="Proteomes" id="UP000000539">
    <property type="component" value="Unassembled WGS sequence"/>
</dbReference>
<dbReference type="GO" id="GO:0005759">
    <property type="term" value="C:mitochondrial matrix"/>
    <property type="evidence" value="ECO:0007669"/>
    <property type="project" value="UniProtKB-SubCell"/>
</dbReference>
<dbReference type="GO" id="GO:0005739">
    <property type="term" value="C:mitochondrion"/>
    <property type="evidence" value="ECO:0000318"/>
    <property type="project" value="GO_Central"/>
</dbReference>
<dbReference type="GO" id="GO:0016784">
    <property type="term" value="F:3-mercaptopyruvate sulfurtransferase activity"/>
    <property type="evidence" value="ECO:0000318"/>
    <property type="project" value="GO_Central"/>
</dbReference>
<dbReference type="GO" id="GO:0008097">
    <property type="term" value="F:5S rRNA binding"/>
    <property type="evidence" value="ECO:0000250"/>
    <property type="project" value="UniProtKB"/>
</dbReference>
<dbReference type="GO" id="GO:0004792">
    <property type="term" value="F:thiosulfate-cyanide sulfurtransferase activity"/>
    <property type="evidence" value="ECO:0000318"/>
    <property type="project" value="GO_Central"/>
</dbReference>
<dbReference type="GO" id="GO:0035928">
    <property type="term" value="P:rRNA import into mitochondrion"/>
    <property type="evidence" value="ECO:0000250"/>
    <property type="project" value="UniProtKB"/>
</dbReference>
<dbReference type="GO" id="GO:0051029">
    <property type="term" value="P:rRNA transport"/>
    <property type="evidence" value="ECO:0000250"/>
    <property type="project" value="UniProtKB"/>
</dbReference>
<dbReference type="CDD" id="cd01448">
    <property type="entry name" value="TST_Repeat_1"/>
    <property type="match status" value="1"/>
</dbReference>
<dbReference type="CDD" id="cd01449">
    <property type="entry name" value="TST_Repeat_2"/>
    <property type="match status" value="1"/>
</dbReference>
<dbReference type="FunFam" id="3.40.250.10:FF:000001">
    <property type="entry name" value="Sulfurtransferase"/>
    <property type="match status" value="1"/>
</dbReference>
<dbReference type="FunFam" id="3.40.250.10:FF:000008">
    <property type="entry name" value="Sulfurtransferase"/>
    <property type="match status" value="1"/>
</dbReference>
<dbReference type="Gene3D" id="3.40.250.10">
    <property type="entry name" value="Rhodanese-like domain"/>
    <property type="match status" value="2"/>
</dbReference>
<dbReference type="InterPro" id="IPR001763">
    <property type="entry name" value="Rhodanese-like_dom"/>
</dbReference>
<dbReference type="InterPro" id="IPR036873">
    <property type="entry name" value="Rhodanese-like_dom_sf"/>
</dbReference>
<dbReference type="InterPro" id="IPR001307">
    <property type="entry name" value="Thiosulphate_STrfase_CS"/>
</dbReference>
<dbReference type="InterPro" id="IPR045078">
    <property type="entry name" value="TST/MPST-like"/>
</dbReference>
<dbReference type="PANTHER" id="PTHR11364">
    <property type="entry name" value="THIOSULFATE SULFERTANSFERASE"/>
    <property type="match status" value="1"/>
</dbReference>
<dbReference type="PANTHER" id="PTHR11364:SF6">
    <property type="entry name" value="THIOSULFATE SULFURTRANSFERASE"/>
    <property type="match status" value="1"/>
</dbReference>
<dbReference type="Pfam" id="PF00581">
    <property type="entry name" value="Rhodanese"/>
    <property type="match status" value="2"/>
</dbReference>
<dbReference type="SMART" id="SM00450">
    <property type="entry name" value="RHOD"/>
    <property type="match status" value="2"/>
</dbReference>
<dbReference type="SUPFAM" id="SSF52821">
    <property type="entry name" value="Rhodanese/Cell cycle control phosphatase"/>
    <property type="match status" value="2"/>
</dbReference>
<dbReference type="PROSITE" id="PS00380">
    <property type="entry name" value="RHODANESE_1"/>
    <property type="match status" value="1"/>
</dbReference>
<dbReference type="PROSITE" id="PS00683">
    <property type="entry name" value="RHODANESE_2"/>
    <property type="match status" value="1"/>
</dbReference>
<dbReference type="PROSITE" id="PS50206">
    <property type="entry name" value="RHODANESE_3"/>
    <property type="match status" value="2"/>
</dbReference>
<accession>P25324</accession>
<name>THTR_CHICK</name>
<keyword id="KW-0903">Direct protein sequencing</keyword>
<keyword id="KW-0496">Mitochondrion</keyword>
<keyword id="KW-1185">Reference proteome</keyword>
<keyword id="KW-0677">Repeat</keyword>
<keyword id="KW-0694">RNA-binding</keyword>
<keyword id="KW-0808">Transferase</keyword>
<gene>
    <name type="primary">TST</name>
</gene>
<proteinExistence type="evidence at protein level"/>
<sequence length="289" mass="32287">AAQALGRALVSAKWLSEAVRAGRVGAGLRVLDASWYPPEERDARQEFKERHIPGASFFNIEECRDKSSPYDFMLPSEAHFADYVGRLGVSNDTHVVVYDGDELGTFYAPRAWWMFRAFGHREVSVLNGGFKNWVKEGHPVTAEPSQPAEAVFKAKLDKTLLKTFEQAMENVGSKKFQVVDSRPAGRFQGTELDQGLESGHIPGAVNMPFSTFLTESGHEKSIEEIQQMFREKKVDLSKPLTATCRKGVTACHIALAAYLCGKPDVAVYDGSWSEWFHRAPPQYKVTELK</sequence>
<organism>
    <name type="scientific">Gallus gallus</name>
    <name type="common">Chicken</name>
    <dbReference type="NCBI Taxonomy" id="9031"/>
    <lineage>
        <taxon>Eukaryota</taxon>
        <taxon>Metazoa</taxon>
        <taxon>Chordata</taxon>
        <taxon>Craniata</taxon>
        <taxon>Vertebrata</taxon>
        <taxon>Euteleostomi</taxon>
        <taxon>Archelosauria</taxon>
        <taxon>Archosauria</taxon>
        <taxon>Dinosauria</taxon>
        <taxon>Saurischia</taxon>
        <taxon>Theropoda</taxon>
        <taxon>Coelurosauria</taxon>
        <taxon>Aves</taxon>
        <taxon>Neognathae</taxon>
        <taxon>Galloanserae</taxon>
        <taxon>Galliformes</taxon>
        <taxon>Phasianidae</taxon>
        <taxon>Phasianinae</taxon>
        <taxon>Gallus</taxon>
    </lineage>
</organism>
<comment type="function">
    <text evidence="1">Together with MRPL18, acts as a mitochondrial import factor for the cytosolic 5S rRNA. Only the nascent unfolded cytoplasmic form is able to bind to the 5S rRNA (By similarity). Formation of iron-sulfur complexes and cyanide detoxification.</text>
</comment>
<comment type="catalytic activity">
    <reaction>
        <text>thiosulfate + hydrogen cyanide = thiocyanate + sulfite + 2 H(+)</text>
        <dbReference type="Rhea" id="RHEA:16881"/>
        <dbReference type="ChEBI" id="CHEBI:15378"/>
        <dbReference type="ChEBI" id="CHEBI:17359"/>
        <dbReference type="ChEBI" id="CHEBI:18022"/>
        <dbReference type="ChEBI" id="CHEBI:18407"/>
        <dbReference type="ChEBI" id="CHEBI:33542"/>
        <dbReference type="EC" id="2.8.1.1"/>
    </reaction>
</comment>
<comment type="subunit">
    <text>Monomer.</text>
</comment>
<comment type="subcellular location">
    <subcellularLocation>
        <location>Mitochondrion matrix</location>
    </subcellularLocation>
</comment>
<comment type="tissue specificity">
    <text>Expressed in numerous tissues.</text>
</comment>
<comment type="domain">
    <text evidence="1">Contains two rhodanese domains with different primary structures but with near identical secondary structure conformations suggesting a common evolutionary origin. Only the C-terminal rhodanese domain contains the catalytic cysteine residue (By similarity).</text>
</comment>